<proteinExistence type="evidence at transcript level"/>
<feature type="initiator methionine" description="Removed" evidence="1">
    <location>
        <position position="1"/>
    </location>
</feature>
<feature type="chain" id="PRO_0000326512" description="Protein FAM50B">
    <location>
        <begin position="2"/>
        <end position="325"/>
    </location>
</feature>
<feature type="region of interest" description="Disordered" evidence="2">
    <location>
        <begin position="137"/>
        <end position="160"/>
    </location>
</feature>
<feature type="modified residue" description="N-acetylalanine" evidence="1">
    <location>
        <position position="2"/>
    </location>
</feature>
<name>FA50B_MACFA</name>
<gene>
    <name type="primary">FAM50B</name>
    <name type="ORF">QtsA-13479</name>
</gene>
<protein>
    <recommendedName>
        <fullName>Protein FAM50B</fullName>
    </recommendedName>
</protein>
<comment type="similarity">
    <text evidence="3">Belongs to the FAM50 family.</text>
</comment>
<organism>
    <name type="scientific">Macaca fascicularis</name>
    <name type="common">Crab-eating macaque</name>
    <name type="synonym">Cynomolgus monkey</name>
    <dbReference type="NCBI Taxonomy" id="9541"/>
    <lineage>
        <taxon>Eukaryota</taxon>
        <taxon>Metazoa</taxon>
        <taxon>Chordata</taxon>
        <taxon>Craniata</taxon>
        <taxon>Vertebrata</taxon>
        <taxon>Euteleostomi</taxon>
        <taxon>Mammalia</taxon>
        <taxon>Eutheria</taxon>
        <taxon>Euarchontoglires</taxon>
        <taxon>Primates</taxon>
        <taxon>Haplorrhini</taxon>
        <taxon>Catarrhini</taxon>
        <taxon>Cercopithecidae</taxon>
        <taxon>Cercopithecinae</taxon>
        <taxon>Macaca</taxon>
    </lineage>
</organism>
<dbReference type="EMBL" id="AB168613">
    <property type="protein sequence ID" value="BAE00726.1"/>
    <property type="molecule type" value="mRNA"/>
</dbReference>
<dbReference type="RefSeq" id="NP_001271061.1">
    <property type="nucleotide sequence ID" value="NM_001284132.1"/>
</dbReference>
<dbReference type="SMR" id="Q4R846"/>
<dbReference type="STRING" id="9541.ENSMFAP00000011300"/>
<dbReference type="eggNOG" id="KOG2894">
    <property type="taxonomic scope" value="Eukaryota"/>
</dbReference>
<dbReference type="Proteomes" id="UP000233100">
    <property type="component" value="Unplaced"/>
</dbReference>
<dbReference type="GO" id="GO:0005634">
    <property type="term" value="C:nucleus"/>
    <property type="evidence" value="ECO:0007669"/>
    <property type="project" value="InterPro"/>
</dbReference>
<dbReference type="GO" id="GO:0006325">
    <property type="term" value="P:chromatin organization"/>
    <property type="evidence" value="ECO:0007669"/>
    <property type="project" value="TreeGrafter"/>
</dbReference>
<dbReference type="InterPro" id="IPR048337">
    <property type="entry name" value="FAM50A/XAP5_C"/>
</dbReference>
<dbReference type="InterPro" id="IPR007005">
    <property type="entry name" value="XAP5"/>
</dbReference>
<dbReference type="PANTHER" id="PTHR12722:SF1">
    <property type="entry name" value="PROTEIN FAM50B"/>
    <property type="match status" value="1"/>
</dbReference>
<dbReference type="PANTHER" id="PTHR12722">
    <property type="entry name" value="XAP-5 PROTEIN-RELATED"/>
    <property type="match status" value="1"/>
</dbReference>
<dbReference type="Pfam" id="PF04921">
    <property type="entry name" value="XAP5"/>
    <property type="match status" value="1"/>
</dbReference>
<sequence length="325" mass="38765">MAQYKGTMREAGRAMHLLKKREKQREQMEVLKQRIAEETILKSQVDKKFSAHYDAVEAELKSSTVGLVTLNDMKARQEALIRERERQLAKRQQLEEQRLQQERLREQEHRRERKRKISCLSFALDDLDDQADAAEARRAGNLGKNPDVDTSFLPDRDREEEENRLREELRQEWEAQREKVKDEEMEVTFSYWDGSGHRRTVRVRKGNTVQQFLKKALQGQRKDFLELRSAGVEQLMFIKEDLILPHYHTFYDFIIAKARGKSRPLFNFDVHDDVRLLSDATMEKDESHAGKVVLRSWYEKNKHIFPASRWEAYDPEKKWDKYTIR</sequence>
<reference key="1">
    <citation type="submission" date="2005-06" db="EMBL/GenBank/DDBJ databases">
        <title>DNA sequences of macaque genes expressed in brain or testis and its evolutionary implications.</title>
        <authorList>
            <consortium name="International consortium for macaque cDNA sequencing and analysis"/>
        </authorList>
    </citation>
    <scope>NUCLEOTIDE SEQUENCE [LARGE SCALE MRNA]</scope>
    <source>
        <tissue>Testis</tissue>
    </source>
</reference>
<keyword id="KW-0007">Acetylation</keyword>
<keyword id="KW-1185">Reference proteome</keyword>
<accession>Q4R846</accession>
<evidence type="ECO:0000250" key="1">
    <source>
        <dbReference type="UniProtKB" id="Q9Y247"/>
    </source>
</evidence>
<evidence type="ECO:0000256" key="2">
    <source>
        <dbReference type="SAM" id="MobiDB-lite"/>
    </source>
</evidence>
<evidence type="ECO:0000305" key="3"/>